<reference key="1">
    <citation type="journal article" date="2004" name="Genomics">
        <title>A cluster of 21 keratin-associated protein genes within introns of another gene on human chromosome 21q22.3.</title>
        <authorList>
            <person name="Shibuya K."/>
            <person name="Obayashi I."/>
            <person name="Asakawa S."/>
            <person name="Minoshima S."/>
            <person name="Kudoh J."/>
            <person name="Shimizu N."/>
        </authorList>
    </citation>
    <scope>NUCLEOTIDE SEQUENCE [MRNA]</scope>
    <scope>TISSUE SPECIFICITY</scope>
    <scope>VARIANT PRO-SER-CYS-CYS-ALA-81 INS</scope>
    <source>
        <tissue>Hair root</tissue>
    </source>
</reference>
<reference key="2">
    <citation type="journal article" date="2000" name="Nature">
        <title>The DNA sequence of human chromosome 21.</title>
        <authorList>
            <person name="Hattori M."/>
            <person name="Fujiyama A."/>
            <person name="Taylor T.D."/>
            <person name="Watanabe H."/>
            <person name="Yada T."/>
            <person name="Park H.-S."/>
            <person name="Toyoda A."/>
            <person name="Ishii K."/>
            <person name="Totoki Y."/>
            <person name="Choi D.-K."/>
            <person name="Groner Y."/>
            <person name="Soeda E."/>
            <person name="Ohki M."/>
            <person name="Takagi T."/>
            <person name="Sakaki Y."/>
            <person name="Taudien S."/>
            <person name="Blechschmidt K."/>
            <person name="Polley A."/>
            <person name="Menzel U."/>
            <person name="Delabar J."/>
            <person name="Kumpf K."/>
            <person name="Lehmann R."/>
            <person name="Patterson D."/>
            <person name="Reichwald K."/>
            <person name="Rump A."/>
            <person name="Schillhabel M."/>
            <person name="Schudy A."/>
            <person name="Zimmermann W."/>
            <person name="Rosenthal A."/>
            <person name="Kudoh J."/>
            <person name="Shibuya K."/>
            <person name="Kawasaki K."/>
            <person name="Asakawa S."/>
            <person name="Shintani A."/>
            <person name="Sasaki T."/>
            <person name="Nagamine K."/>
            <person name="Mitsuyama S."/>
            <person name="Antonarakis S.E."/>
            <person name="Minoshima S."/>
            <person name="Shimizu N."/>
            <person name="Nordsiek G."/>
            <person name="Hornischer K."/>
            <person name="Brandt P."/>
            <person name="Scharfe M."/>
            <person name="Schoen O."/>
            <person name="Desario A."/>
            <person name="Reichelt J."/>
            <person name="Kauer G."/>
            <person name="Bloecker H."/>
            <person name="Ramser J."/>
            <person name="Beck A."/>
            <person name="Klages S."/>
            <person name="Hennig S."/>
            <person name="Riesselmann L."/>
            <person name="Dagand E."/>
            <person name="Wehrmeyer S."/>
            <person name="Borzym K."/>
            <person name="Gardiner K."/>
            <person name="Nizetic D."/>
            <person name="Francis F."/>
            <person name="Lehrach H."/>
            <person name="Reinhardt R."/>
            <person name="Yaspo M.-L."/>
        </authorList>
    </citation>
    <scope>NUCLEOTIDE SEQUENCE [LARGE SCALE GENOMIC DNA]</scope>
</reference>
<reference key="3">
    <citation type="journal article" date="2004" name="J. Invest. Dermatol.">
        <title>Hair keratin associated proteins: characterization of a second high sulfur KAP gene domain on human chromosome 21.</title>
        <authorList>
            <person name="Rogers M.A."/>
            <person name="Langbein L."/>
            <person name="Winter H."/>
            <person name="Beckmann I."/>
            <person name="Praetzel S."/>
            <person name="Schweizer J."/>
        </authorList>
    </citation>
    <scope>TISSUE SPECIFICITY</scope>
</reference>
<protein>
    <recommendedName>
        <fullName>Keratin-associated protein 10-6</fullName>
    </recommendedName>
    <alternativeName>
        <fullName>High sulfur keratin-associated protein 10.6</fullName>
    </alternativeName>
    <alternativeName>
        <fullName>Keratin-associated protein 10.6</fullName>
    </alternativeName>
    <alternativeName>
        <fullName>Keratin-associated protein 18-6</fullName>
    </alternativeName>
    <alternativeName>
        <fullName>Keratin-associated protein 18.6</fullName>
    </alternativeName>
</protein>
<dbReference type="EMBL" id="AB076353">
    <property type="protein sequence ID" value="BAD01540.1"/>
    <property type="molecule type" value="mRNA"/>
</dbReference>
<dbReference type="EMBL" id="AL773602">
    <property type="status" value="NOT_ANNOTATED_CDS"/>
    <property type="molecule type" value="Genomic_DNA"/>
</dbReference>
<dbReference type="CCDS" id="CCDS42959.1"/>
<dbReference type="RefSeq" id="NP_941961.3">
    <property type="nucleotide sequence ID" value="NM_198688.3"/>
</dbReference>
<dbReference type="BioGRID" id="132125">
    <property type="interactions" value="87"/>
</dbReference>
<dbReference type="FunCoup" id="P60371">
    <property type="interactions" value="592"/>
</dbReference>
<dbReference type="IntAct" id="P60371">
    <property type="interactions" value="72"/>
</dbReference>
<dbReference type="STRING" id="9606.ENSP00000383219"/>
<dbReference type="iPTMnet" id="P60371"/>
<dbReference type="PhosphoSitePlus" id="P60371"/>
<dbReference type="BioMuta" id="KRTAP10-6"/>
<dbReference type="DMDM" id="288558812"/>
<dbReference type="MassIVE" id="P60371"/>
<dbReference type="PaxDb" id="9606-ENSP00000383219"/>
<dbReference type="PeptideAtlas" id="P60371"/>
<dbReference type="Antibodypedia" id="78046">
    <property type="antibodies" value="2 antibodies from 2 providers"/>
</dbReference>
<dbReference type="DNASU" id="386674"/>
<dbReference type="Ensembl" id="ENST00000400368.1">
    <property type="protein sequence ID" value="ENSP00000383219.1"/>
    <property type="gene ID" value="ENSG00000188155.11"/>
</dbReference>
<dbReference type="GeneID" id="386674"/>
<dbReference type="KEGG" id="hsa:386674"/>
<dbReference type="MANE-Select" id="ENST00000400368.1">
    <property type="protein sequence ID" value="ENSP00000383219.1"/>
    <property type="RefSeq nucleotide sequence ID" value="NM_198688.3"/>
    <property type="RefSeq protein sequence ID" value="NP_941961.3"/>
</dbReference>
<dbReference type="UCSC" id="uc032qbq.1">
    <property type="organism name" value="human"/>
</dbReference>
<dbReference type="AGR" id="HGNC:20523"/>
<dbReference type="CTD" id="386674"/>
<dbReference type="DisGeNET" id="386674"/>
<dbReference type="GeneCards" id="KRTAP10-6"/>
<dbReference type="HGNC" id="HGNC:20523">
    <property type="gene designation" value="KRTAP10-6"/>
</dbReference>
<dbReference type="HPA" id="ENSG00000188155">
    <property type="expression patterns" value="Tissue enriched (skin)"/>
</dbReference>
<dbReference type="neXtProt" id="NX_P60371"/>
<dbReference type="PharmGKB" id="PA134871340"/>
<dbReference type="VEuPathDB" id="HostDB:ENSG00000188155"/>
<dbReference type="eggNOG" id="KOG4726">
    <property type="taxonomic scope" value="Eukaryota"/>
</dbReference>
<dbReference type="GeneTree" id="ENSGT00940000164049"/>
<dbReference type="InParanoid" id="P60371"/>
<dbReference type="OMA" id="TAQTREC"/>
<dbReference type="OrthoDB" id="9540254at2759"/>
<dbReference type="PAN-GO" id="P60371">
    <property type="GO annotations" value="0 GO annotations based on evolutionary models"/>
</dbReference>
<dbReference type="PhylomeDB" id="P60371"/>
<dbReference type="PathwayCommons" id="P60371"/>
<dbReference type="Reactome" id="R-HSA-6805567">
    <property type="pathway name" value="Keratinization"/>
</dbReference>
<dbReference type="SignaLink" id="P60371"/>
<dbReference type="BioGRID-ORCS" id="386674">
    <property type="hits" value="28 hits in 1031 CRISPR screens"/>
</dbReference>
<dbReference type="GenomeRNAi" id="386674"/>
<dbReference type="Pharos" id="P60371">
    <property type="development level" value="Tdark"/>
</dbReference>
<dbReference type="PRO" id="PR:P60371"/>
<dbReference type="Proteomes" id="UP000005640">
    <property type="component" value="Chromosome 21"/>
</dbReference>
<dbReference type="RNAct" id="P60371">
    <property type="molecule type" value="protein"/>
</dbReference>
<dbReference type="Bgee" id="ENSG00000188155">
    <property type="expression patterns" value="Expressed in skin of abdomen and 7 other cell types or tissues"/>
</dbReference>
<dbReference type="GO" id="GO:0005829">
    <property type="term" value="C:cytosol"/>
    <property type="evidence" value="ECO:0000304"/>
    <property type="project" value="Reactome"/>
</dbReference>
<dbReference type="GO" id="GO:0045095">
    <property type="term" value="C:keratin filament"/>
    <property type="evidence" value="ECO:0007669"/>
    <property type="project" value="InterPro"/>
</dbReference>
<dbReference type="InterPro" id="IPR002494">
    <property type="entry name" value="KAP"/>
</dbReference>
<dbReference type="PANTHER" id="PTHR23262">
    <property type="entry name" value="KERATIN ASSOCIATED PROTEIN"/>
    <property type="match status" value="1"/>
</dbReference>
<dbReference type="PANTHER" id="PTHR23262:SF170">
    <property type="entry name" value="KERATIN-ASSOCIATED PROTEIN 10-9"/>
    <property type="match status" value="1"/>
</dbReference>
<dbReference type="Pfam" id="PF13885">
    <property type="entry name" value="Keratin_B2_2"/>
    <property type="match status" value="4"/>
</dbReference>
<name>KR106_HUMAN</name>
<accession>P60371</accession>
<comment type="function">
    <text>In the hair cortex, hair keratin intermediate filaments are embedded in an interfilamentous matrix, consisting of hair keratin-associated proteins (KRTAP), which are essential for the formation of a rigid and resistant hair shaft through their extensive disulfide bond cross-linking with abundant cysteine residues of hair keratins. The matrix proteins include the high-sulfur and high-glycine-tyrosine keratins.</text>
</comment>
<comment type="subunit">
    <text>Interacts with hair keratins.</text>
</comment>
<comment type="interaction">
    <interactant intactId="EBI-12012928">
        <id>P60371</id>
    </interactant>
    <interactant intactId="EBI-10221726">
        <id>P82987</id>
        <label>ADAMTSL3</label>
    </interactant>
    <organismsDiffer>false</organismsDiffer>
    <experiments>3</experiments>
</comment>
<comment type="interaction">
    <interactant intactId="EBI-12012928">
        <id>P60371</id>
    </interactant>
    <interactant intactId="EBI-8640233">
        <id>Q5T686</id>
        <label>AVPI1</label>
    </interactant>
    <organismsDiffer>false</organismsDiffer>
    <experiments>3</experiments>
</comment>
<comment type="interaction">
    <interactant intactId="EBI-12012928">
        <id>P60371</id>
    </interactant>
    <interactant intactId="EBI-11981867">
        <id>P49759-3</id>
        <label>CLK1</label>
    </interactant>
    <organismsDiffer>false</organismsDiffer>
    <experiments>3</experiments>
</comment>
<comment type="interaction">
    <interactant intactId="EBI-12012928">
        <id>P60371</id>
    </interactant>
    <interactant intactId="EBI-633400">
        <id>Q9HAZ1</id>
        <label>CLK4</label>
    </interactant>
    <organismsDiffer>false</organismsDiffer>
    <experiments>3</experiments>
</comment>
<comment type="interaction">
    <interactant intactId="EBI-12012928">
        <id>P60371</id>
    </interactant>
    <interactant intactId="EBI-1051531">
        <id>Q6P158</id>
        <label>DHX57</label>
    </interactant>
    <organismsDiffer>false</organismsDiffer>
    <experiments>3</experiments>
</comment>
<comment type="interaction">
    <interactant intactId="EBI-12012928">
        <id>P60371</id>
    </interactant>
    <interactant intactId="EBI-13274770">
        <id>Q9UBU2</id>
        <label>DKK2</label>
    </interactant>
    <organismsDiffer>false</organismsDiffer>
    <experiments>3</experiments>
</comment>
<comment type="interaction">
    <interactant intactId="EBI-12012928">
        <id>P60371</id>
    </interactant>
    <interactant intactId="EBI-11317801">
        <id>Q12950</id>
        <label>FOXD4</label>
    </interactant>
    <organismsDiffer>false</organismsDiffer>
    <experiments>3</experiments>
</comment>
<comment type="interaction">
    <interactant intactId="EBI-12012928">
        <id>P60371</id>
    </interactant>
    <interactant intactId="EBI-11320290">
        <id>O96004</id>
        <label>HAND1</label>
    </interactant>
    <organismsDiffer>false</organismsDiffer>
    <experiments>3</experiments>
</comment>
<comment type="interaction">
    <interactant intactId="EBI-12012928">
        <id>P60371</id>
    </interactant>
    <interactant intactId="EBI-747421">
        <id>Q03014</id>
        <label>HHEX</label>
    </interactant>
    <organismsDiffer>false</organismsDiffer>
    <experiments>3</experiments>
</comment>
<comment type="interaction">
    <interactant intactId="EBI-12012928">
        <id>P60371</id>
    </interactant>
    <interactant intactId="EBI-3893317">
        <id>P09067</id>
        <label>HOXB5</label>
    </interactant>
    <organismsDiffer>false</organismsDiffer>
    <experiments>3</experiments>
</comment>
<comment type="interaction">
    <interactant intactId="EBI-12012928">
        <id>P60371</id>
    </interactant>
    <interactant intactId="EBI-20764875">
        <id>A0A384DVV8</id>
        <label>KIAA0040</label>
    </interactant>
    <organismsDiffer>false</organismsDiffer>
    <experiments>3</experiments>
</comment>
<comment type="interaction">
    <interactant intactId="EBI-12012928">
        <id>P60371</id>
    </interactant>
    <interactant intactId="EBI-8472129">
        <id>Q9HAQ2</id>
        <label>KIF9</label>
    </interactant>
    <organismsDiffer>false</organismsDiffer>
    <experiments>3</experiments>
</comment>
<comment type="interaction">
    <interactant intactId="EBI-12012928">
        <id>P60371</id>
    </interactant>
    <interactant intactId="EBI-10172150">
        <id>P60370</id>
        <label>KRTAP10-5</label>
    </interactant>
    <organismsDiffer>false</organismsDiffer>
    <experiments>3</experiments>
</comment>
<comment type="interaction">
    <interactant intactId="EBI-12012928">
        <id>P60371</id>
    </interactant>
    <interactant intactId="EBI-10172511">
        <id>Q9BYR5</id>
        <label>KRTAP4-2</label>
    </interactant>
    <organismsDiffer>false</organismsDiffer>
    <experiments>3</experiments>
</comment>
<comment type="interaction">
    <interactant intactId="EBI-12012928">
        <id>P60371</id>
    </interactant>
    <interactant intactId="EBI-11958132">
        <id>Q9BYR3</id>
        <label>KRTAP4-4</label>
    </interactant>
    <organismsDiffer>false</organismsDiffer>
    <experiments>3</experiments>
</comment>
<comment type="interaction">
    <interactant intactId="EBI-12012928">
        <id>P60371</id>
    </interactant>
    <interactant intactId="EBI-11993254">
        <id>Q9BYR2</id>
        <label>KRTAP4-5</label>
    </interactant>
    <organismsDiffer>false</organismsDiffer>
    <experiments>3</experiments>
</comment>
<comment type="interaction">
    <interactant intactId="EBI-12012928">
        <id>P60371</id>
    </interactant>
    <interactant intactId="EBI-11993296">
        <id>Q6L8G4</id>
        <label>KRTAP5-11</label>
    </interactant>
    <organismsDiffer>false</organismsDiffer>
    <experiments>3</experiments>
</comment>
<comment type="interaction">
    <interactant intactId="EBI-12012928">
        <id>P60371</id>
    </interactant>
    <interactant intactId="EBI-11958178">
        <id>Q701N4</id>
        <label>KRTAP5-2</label>
    </interactant>
    <organismsDiffer>false</organismsDiffer>
    <experiments>3</experiments>
</comment>
<comment type="interaction">
    <interactant intactId="EBI-12012928">
        <id>P60371</id>
    </interactant>
    <interactant intactId="EBI-3958099">
        <id>P26371</id>
        <label>KRTAP5-9</label>
    </interactant>
    <organismsDiffer>false</organismsDiffer>
    <experiments>3</experiments>
</comment>
<comment type="interaction">
    <interactant intactId="EBI-12012928">
        <id>P60371</id>
    </interactant>
    <interactant intactId="EBI-11955335">
        <id>Q5T753</id>
        <label>LCE1E</label>
    </interactant>
    <organismsDiffer>false</organismsDiffer>
    <experiments>3</experiments>
</comment>
<comment type="interaction">
    <interactant intactId="EBI-12012928">
        <id>P60371</id>
    </interactant>
    <interactant intactId="EBI-11958008">
        <id>Q5T754</id>
        <label>LCE1F</label>
    </interactant>
    <organismsDiffer>false</organismsDiffer>
    <experiments>3</experiments>
</comment>
<comment type="interaction">
    <interactant intactId="EBI-12012928">
        <id>P60371</id>
    </interactant>
    <interactant intactId="EBI-11973993">
        <id>Q5TA81</id>
        <label>LCE2C</label>
    </interactant>
    <organismsDiffer>false</organismsDiffer>
    <experiments>3</experiments>
</comment>
<comment type="interaction">
    <interactant intactId="EBI-12012928">
        <id>P60371</id>
    </interactant>
    <interactant intactId="EBI-10246750">
        <id>Q5TA82</id>
        <label>LCE2D</label>
    </interactant>
    <organismsDiffer>false</organismsDiffer>
    <experiments>3</experiments>
</comment>
<comment type="interaction">
    <interactant intactId="EBI-12012928">
        <id>P60371</id>
    </interactant>
    <interactant intactId="EBI-11974495">
        <id>Q5TA77</id>
        <label>LCE3B</label>
    </interactant>
    <organismsDiffer>false</organismsDiffer>
    <experiments>3</experiments>
</comment>
<comment type="interaction">
    <interactant intactId="EBI-12012928">
        <id>P60371</id>
    </interactant>
    <interactant intactId="EBI-10245456">
        <id>Q5T5B0</id>
        <label>LCE3E</label>
    </interactant>
    <organismsDiffer>false</organismsDiffer>
    <experiments>3</experiments>
</comment>
<comment type="interaction">
    <interactant intactId="EBI-12012928">
        <id>P60371</id>
    </interactant>
    <interactant intactId="EBI-10246358">
        <id>Q5TA78</id>
        <label>LCE4A</label>
    </interactant>
    <organismsDiffer>false</organismsDiffer>
    <experiments>3</experiments>
</comment>
<comment type="interaction">
    <interactant intactId="EBI-12012928">
        <id>P60371</id>
    </interactant>
    <interactant intactId="EBI-745345">
        <id>Q96ES6</id>
        <label>MFSD3</label>
    </interactant>
    <organismsDiffer>false</organismsDiffer>
    <experiments>3</experiments>
</comment>
<comment type="interaction">
    <interactant intactId="EBI-12012928">
        <id>P60371</id>
    </interactant>
    <interactant intactId="EBI-12013470">
        <id>Q13875-3</id>
        <label>MOBP</label>
    </interactant>
    <organismsDiffer>false</organismsDiffer>
    <experiments>3</experiments>
</comment>
<comment type="interaction">
    <interactant intactId="EBI-12012928">
        <id>P60371</id>
    </interactant>
    <interactant intactId="EBI-12015462">
        <id>P07438</id>
        <label>MT1B</label>
    </interactant>
    <organismsDiffer>false</organismsDiffer>
    <experiments>3</experiments>
</comment>
<comment type="interaction">
    <interactant intactId="EBI-12012928">
        <id>P60371</id>
    </interactant>
    <interactant intactId="EBI-747693">
        <id>P41227</id>
        <label>NAA10</label>
    </interactant>
    <organismsDiffer>false</organismsDiffer>
    <experiments>3</experiments>
</comment>
<comment type="interaction">
    <interactant intactId="EBI-12012928">
        <id>P60371</id>
    </interactant>
    <interactant intactId="EBI-8650724">
        <id>Q8IW45</id>
        <label>NAXD</label>
    </interactant>
    <organismsDiffer>false</organismsDiffer>
    <experiments>3</experiments>
</comment>
<comment type="interaction">
    <interactant intactId="EBI-12012928">
        <id>P60371</id>
    </interactant>
    <interactant intactId="EBI-1538217">
        <id>Q969G9</id>
        <label>NKD1</label>
    </interactant>
    <organismsDiffer>false</organismsDiffer>
    <experiments>3</experiments>
</comment>
<comment type="interaction">
    <interactant intactId="EBI-12012928">
        <id>P60371</id>
    </interactant>
    <interactant intactId="EBI-10210351">
        <id>P48645</id>
        <label>NMU</label>
    </interactant>
    <organismsDiffer>false</organismsDiffer>
    <experiments>3</experiments>
</comment>
<comment type="interaction">
    <interactant intactId="EBI-12012928">
        <id>P60371</id>
    </interactant>
    <interactant intactId="EBI-716098">
        <id>Q9UGY1</id>
        <label>NOL12</label>
    </interactant>
    <organismsDiffer>false</organismsDiffer>
    <experiments>3</experiments>
</comment>
<comment type="interaction">
    <interactant intactId="EBI-12012928">
        <id>P60371</id>
    </interactant>
    <interactant intactId="EBI-748927">
        <id>Q9NQX5</id>
        <label>NPDC1</label>
    </interactant>
    <organismsDiffer>false</organismsDiffer>
    <experiments>3</experiments>
</comment>
<comment type="interaction">
    <interactant intactId="EBI-12012928">
        <id>P60371</id>
    </interactant>
    <interactant intactId="EBI-740845">
        <id>Q96AQ6</id>
        <label>PBXIP1</label>
    </interactant>
    <organismsDiffer>false</organismsDiffer>
    <experiments>3</experiments>
</comment>
<comment type="interaction">
    <interactant intactId="EBI-12012928">
        <id>P60371</id>
    </interactant>
    <interactant intactId="EBI-714158">
        <id>Q13526</id>
        <label>PIN1</label>
    </interactant>
    <organismsDiffer>false</organismsDiffer>
    <experiments>3</experiments>
</comment>
<comment type="interaction">
    <interactant intactId="EBI-12012928">
        <id>P60371</id>
    </interactant>
    <interactant intactId="EBI-12009390">
        <id>Q6UXX9-2</id>
        <label>RSPO2</label>
    </interactant>
    <organismsDiffer>false</organismsDiffer>
    <experiments>3</experiments>
</comment>
<comment type="interaction">
    <interactant intactId="EBI-12012928">
        <id>P60371</id>
    </interactant>
    <interactant intactId="EBI-749336">
        <id>Q8TAD8</id>
        <label>SNIP1</label>
    </interactant>
    <organismsDiffer>false</organismsDiffer>
    <experiments>3</experiments>
</comment>
<comment type="interaction">
    <interactant intactId="EBI-12012928">
        <id>P60371</id>
    </interactant>
    <interactant intactId="EBI-12140683">
        <id>Q9BX79-6</id>
        <label>STRA6</label>
    </interactant>
    <organismsDiffer>false</organismsDiffer>
    <experiments>3</experiments>
</comment>
<comment type="interaction">
    <interactant intactId="EBI-12012928">
        <id>P60371</id>
    </interactant>
    <interactant intactId="EBI-10249550">
        <id>Q6EMK4</id>
        <label>VASN</label>
    </interactant>
    <organismsDiffer>false</organismsDiffer>
    <experiments>3</experiments>
</comment>
<comment type="interaction">
    <interactant intactId="EBI-12012928">
        <id>P60371</id>
    </interactant>
    <interactant intactId="EBI-11745701">
        <id>P19544-6</id>
        <label>WT1</label>
    </interactant>
    <organismsDiffer>false</organismsDiffer>
    <experiments>3</experiments>
</comment>
<comment type="interaction">
    <interactant intactId="EBI-12012928">
        <id>P60371</id>
    </interactant>
    <interactant intactId="EBI-2849854">
        <id>Q96MU7</id>
        <label>YTHDC1</label>
    </interactant>
    <organismsDiffer>false</organismsDiffer>
    <experiments>3</experiments>
</comment>
<comment type="interaction">
    <interactant intactId="EBI-12012928">
        <id>P60371</id>
    </interactant>
    <interactant intactId="EBI-744471">
        <id>O43167</id>
        <label>ZBTB24</label>
    </interactant>
    <organismsDiffer>false</organismsDiffer>
    <experiments>3</experiments>
</comment>
<comment type="interaction">
    <interactant intactId="EBI-12012928">
        <id>P60371</id>
    </interactant>
    <interactant intactId="EBI-922540">
        <id>Q7Z2W4</id>
        <label>ZC3HAV1</label>
    </interactant>
    <organismsDiffer>false</organismsDiffer>
    <experiments>3</experiments>
</comment>
<comment type="interaction">
    <interactant intactId="EBI-12012928">
        <id>P60371</id>
    </interactant>
    <interactant intactId="EBI-11962760">
        <id>Q9NZV7</id>
        <label>ZIM2</label>
    </interactant>
    <organismsDiffer>false</organismsDiffer>
    <experiments>3</experiments>
</comment>
<comment type="interaction">
    <interactant intactId="EBI-12012928">
        <id>P60371</id>
    </interactant>
    <interactant intactId="EBI-10265237">
        <id>Q8NC26</id>
        <label>ZNF114</label>
    </interactant>
    <organismsDiffer>false</organismsDiffer>
    <experiments>3</experiments>
</comment>
<comment type="interaction">
    <interactant intactId="EBI-12012928">
        <id>P60371</id>
    </interactant>
    <interactant intactId="EBI-10746567">
        <id>P52744</id>
        <label>ZNF138</label>
    </interactant>
    <organismsDiffer>false</organismsDiffer>
    <experiments>3</experiments>
</comment>
<comment type="interaction">
    <interactant intactId="EBI-12012928">
        <id>P60371</id>
    </interactant>
    <interactant intactId="EBI-10747670">
        <id>Q12901</id>
        <label>ZNF155</label>
    </interactant>
    <organismsDiffer>false</organismsDiffer>
    <experiments>3</experiments>
</comment>
<comment type="interaction">
    <interactant intactId="EBI-12012928">
        <id>P60371</id>
    </interactant>
    <interactant intactId="EBI-10234472">
        <id>Q14929</id>
        <label>ZNF169</label>
    </interactant>
    <organismsDiffer>false</organismsDiffer>
    <experiments>3</experiments>
</comment>
<comment type="interaction">
    <interactant intactId="EBI-12012928">
        <id>P60371</id>
    </interactant>
    <interactant intactId="EBI-14513896">
        <id>Q9UK13</id>
        <label>ZNF221</label>
    </interactant>
    <organismsDiffer>false</organismsDiffer>
    <experiments>3</experiments>
</comment>
<comment type="interaction">
    <interactant intactId="EBI-12012928">
        <id>P60371</id>
    </interactant>
    <interactant intactId="EBI-8787052">
        <id>Q16600</id>
        <label>ZNF239</label>
    </interactant>
    <organismsDiffer>false</organismsDiffer>
    <experiments>3</experiments>
</comment>
<comment type="interaction">
    <interactant intactId="EBI-12012928">
        <id>P60371</id>
    </interactant>
    <interactant intactId="EBI-4395808">
        <id>O43296</id>
        <label>ZNF264</label>
    </interactant>
    <organismsDiffer>false</organismsDiffer>
    <experiments>3</experiments>
</comment>
<comment type="interaction">
    <interactant intactId="EBI-12012928">
        <id>P60371</id>
    </interactant>
    <interactant intactId="EBI-8831272">
        <id>Q8ND82</id>
        <label>ZNF280C</label>
    </interactant>
    <organismsDiffer>false</organismsDiffer>
    <experiments>3</experiments>
</comment>
<comment type="interaction">
    <interactant intactId="EBI-12012928">
        <id>P60371</id>
    </interactant>
    <interactant intactId="EBI-12988373">
        <id>Q9NR11-2</id>
        <label>ZNF302</label>
    </interactant>
    <organismsDiffer>false</organismsDiffer>
    <experiments>3</experiments>
</comment>
<comment type="interaction">
    <interactant intactId="EBI-12012928">
        <id>P60371</id>
    </interactant>
    <interactant intactId="EBI-11993110">
        <id>Q9P2F9</id>
        <label>ZNF319</label>
    </interactant>
    <organismsDiffer>false</organismsDiffer>
    <experiments>3</experiments>
</comment>
<comment type="interaction">
    <interactant intactId="EBI-12012928">
        <id>P60371</id>
    </interactant>
    <interactant intactId="EBI-3446851">
        <id>Q8TF45</id>
        <label>ZNF418</label>
    </interactant>
    <organismsDiffer>false</organismsDiffer>
    <experiments>3</experiments>
</comment>
<comment type="interaction">
    <interactant intactId="EBI-12012928">
        <id>P60371</id>
    </interactant>
    <interactant intactId="EBI-726439">
        <id>Q8IYI8</id>
        <label>ZNF440</label>
    </interactant>
    <organismsDiffer>false</organismsDiffer>
    <experiments>3</experiments>
</comment>
<comment type="interaction">
    <interactant intactId="EBI-12012928">
        <id>P60371</id>
    </interactant>
    <interactant intactId="EBI-10820574">
        <id>Q96JC4</id>
        <label>ZNF479</label>
    </interactant>
    <organismsDiffer>false</organismsDiffer>
    <experiments>3</experiments>
</comment>
<comment type="interaction">
    <interactant intactId="EBI-12012928">
        <id>P60371</id>
    </interactant>
    <interactant intactId="EBI-1105370">
        <id>Q9ULM2</id>
        <label>ZNF490</label>
    </interactant>
    <organismsDiffer>false</organismsDiffer>
    <experiments>3</experiments>
</comment>
<comment type="interaction">
    <interactant intactId="EBI-12012928">
        <id>P60371</id>
    </interactant>
    <interactant intactId="EBI-10226133">
        <id>Q08ER8</id>
        <label>ZNF543</label>
    </interactant>
    <organismsDiffer>false</organismsDiffer>
    <experiments>3</experiments>
</comment>
<comment type="interaction">
    <interactant intactId="EBI-12012928">
        <id>P60371</id>
    </interactant>
    <interactant intactId="EBI-11792334">
        <id>Q8TA94</id>
        <label>ZNF563</label>
    </interactant>
    <organismsDiffer>false</organismsDiffer>
    <experiments>3</experiments>
</comment>
<comment type="interaction">
    <interactant intactId="EBI-12012928">
        <id>P60371</id>
    </interactant>
    <interactant intactId="EBI-2682172">
        <id>Q8IYB9</id>
        <label>ZNF595</label>
    </interactant>
    <organismsDiffer>false</organismsDiffer>
    <experiments>3</experiments>
</comment>
<comment type="interaction">
    <interactant intactId="EBI-12012928">
        <id>P60371</id>
    </interactant>
    <interactant intactId="EBI-3444696">
        <id>Q6ZNG1</id>
        <label>ZNF600</label>
    </interactant>
    <organismsDiffer>false</organismsDiffer>
    <experiments>3</experiments>
</comment>
<comment type="interaction">
    <interactant intactId="EBI-12012928">
        <id>P60371</id>
    </interactant>
    <interactant intactId="EBI-12006574">
        <id>Q96BR6</id>
        <label>ZNF669</label>
    </interactant>
    <organismsDiffer>false</organismsDiffer>
    <experiments>3</experiments>
</comment>
<comment type="interaction">
    <interactant intactId="EBI-12012928">
        <id>P60371</id>
    </interactant>
    <interactant intactId="EBI-12146251">
        <id>Q499Z4</id>
        <label>ZNF672</label>
    </interactant>
    <organismsDiffer>false</organismsDiffer>
    <experiments>3</experiments>
</comment>
<comment type="interaction">
    <interactant intactId="EBI-12012928">
        <id>P60371</id>
    </interactant>
    <interactant intactId="EBI-745567">
        <id>Q8IYX0</id>
        <label>ZNF679</label>
    </interactant>
    <organismsDiffer>false</organismsDiffer>
    <experiments>3</experiments>
</comment>
<comment type="interaction">
    <interactant intactId="EBI-12012928">
        <id>P60371</id>
    </interactant>
    <interactant intactId="EBI-11090299">
        <id>Q9H7X3</id>
        <label>ZNF696</label>
    </interactant>
    <organismsDiffer>false</organismsDiffer>
    <experiments>3</experiments>
</comment>
<comment type="interaction">
    <interactant intactId="EBI-12012928">
        <id>P60371</id>
    </interactant>
    <interactant intactId="EBI-10251462">
        <id>Q6NX45</id>
        <label>ZNF774</label>
    </interactant>
    <organismsDiffer>false</organismsDiffer>
    <experiments>3</experiments>
</comment>
<comment type="interaction">
    <interactant intactId="EBI-12012928">
        <id>P60371</id>
    </interactant>
    <interactant intactId="EBI-12878746">
        <id>Q68DI1</id>
        <label>ZNF776</label>
    </interactant>
    <organismsDiffer>false</organismsDiffer>
    <experiments>3</experiments>
</comment>
<comment type="interaction">
    <interactant intactId="EBI-12012928">
        <id>P60371</id>
    </interactant>
    <interactant intactId="EBI-10240849">
        <id>Q3KQV3</id>
        <label>ZNF792</label>
    </interactant>
    <organismsDiffer>false</organismsDiffer>
    <experiments>3</experiments>
</comment>
<comment type="interaction">
    <interactant intactId="EBI-12012928">
        <id>P60371</id>
    </interactant>
    <interactant intactId="EBI-347522">
        <id>O43257</id>
        <label>ZNHIT1</label>
    </interactant>
    <organismsDiffer>false</organismsDiffer>
    <experiments>3</experiments>
</comment>
<comment type="tissue specificity">
    <text evidence="1 2">Restricted to a narrow region of the hair fiber cuticle, lying approximately 20 cell layers above the apex of the dermal papilla of the hair root; not detected in any other tissues.</text>
</comment>
<comment type="similarity">
    <text evidence="3">Belongs to the KRTAP type 10 family.</text>
</comment>
<gene>
    <name type="primary">KRTAP10-6</name>
    <name type="synonym">KAP10.6</name>
    <name type="synonym">KAP18-6</name>
    <name type="synonym">KRTAP10.6</name>
    <name type="synonym">KRTAP18-6</name>
    <name type="synonym">KRTAP18.6</name>
</gene>
<sequence>MAASTMSVCSSDLSYGSRVCLPGSCDSCSDSWQVDDCPESCCEPPCCAPAPCLSLVCTPVSRVSSPCCPVTCEPSPCQSGCTSSCTPSCCQQSSCQLACCASSPCQQACCVPVCCKTVCCKPVCCVSVCCGDSSCCQQSSCQSACCTSSPCQQACCVPVCCKPVCSGISSSCCQQSSCVSCVSSPCCQAVCEPSPCQSGCTSSCTPSCCQQSSCQPTCCTSSPCQQACCVPVCCVPVCCVPTCSEDSSSCCQQSSCQPACCTSSPCQHACCVPVCSGASTSCCQQSSCQPACCTASCCRSSSSVSLLCHPVCKSTCCVPVPSCGASASSCQPSCCRTASCVSLLCRPMCSRPACYSLCSGQKSSC</sequence>
<keyword id="KW-0416">Keratin</keyword>
<keyword id="KW-1185">Reference proteome</keyword>
<keyword id="KW-0677">Repeat</keyword>
<organism>
    <name type="scientific">Homo sapiens</name>
    <name type="common">Human</name>
    <dbReference type="NCBI Taxonomy" id="9606"/>
    <lineage>
        <taxon>Eukaryota</taxon>
        <taxon>Metazoa</taxon>
        <taxon>Chordata</taxon>
        <taxon>Craniata</taxon>
        <taxon>Vertebrata</taxon>
        <taxon>Euteleostomi</taxon>
        <taxon>Mammalia</taxon>
        <taxon>Eutheria</taxon>
        <taxon>Euarchontoglires</taxon>
        <taxon>Primates</taxon>
        <taxon>Haplorrhini</taxon>
        <taxon>Catarrhini</taxon>
        <taxon>Hominidae</taxon>
        <taxon>Homo</taxon>
    </lineage>
</organism>
<evidence type="ECO:0000269" key="1">
    <source>
    </source>
</evidence>
<evidence type="ECO:0000269" key="2">
    <source>
    </source>
</evidence>
<evidence type="ECO:0000305" key="3"/>
<proteinExistence type="evidence at protein level"/>
<feature type="chain" id="PRO_0000185214" description="Keratin-associated protein 10-6">
    <location>
        <begin position="1"/>
        <end position="365"/>
    </location>
</feature>
<feature type="repeat" description="1">
    <location>
        <begin position="41"/>
        <end position="45"/>
    </location>
</feature>
<feature type="repeat" description="2">
    <location>
        <begin position="46"/>
        <end position="50"/>
    </location>
</feature>
<feature type="repeat" description="3">
    <location>
        <begin position="67"/>
        <end position="71"/>
    </location>
</feature>
<feature type="repeat" description="4">
    <location>
        <begin position="89"/>
        <end position="93"/>
    </location>
</feature>
<feature type="repeat" description="5">
    <location>
        <begin position="99"/>
        <end position="103"/>
    </location>
</feature>
<feature type="repeat" description="6">
    <location>
        <begin position="109"/>
        <end position="113"/>
    </location>
</feature>
<feature type="repeat" description="7">
    <location>
        <begin position="114"/>
        <end position="118"/>
    </location>
</feature>
<feature type="repeat" description="8">
    <location>
        <begin position="119"/>
        <end position="123"/>
    </location>
</feature>
<feature type="repeat" description="9">
    <location>
        <begin position="124"/>
        <end position="128"/>
    </location>
</feature>
<feature type="repeat" description="10">
    <location>
        <begin position="129"/>
        <end position="133"/>
    </location>
</feature>
<feature type="repeat" description="11">
    <location>
        <begin position="135"/>
        <end position="139"/>
    </location>
</feature>
<feature type="repeat" description="12">
    <location>
        <begin position="145"/>
        <end position="149"/>
    </location>
</feature>
<feature type="repeat" description="13">
    <location>
        <begin position="155"/>
        <end position="159"/>
    </location>
</feature>
<feature type="repeat" description="14">
    <location>
        <begin position="160"/>
        <end position="164"/>
    </location>
</feature>
<feature type="repeat" description="15">
    <location>
        <begin position="172"/>
        <end position="176"/>
    </location>
</feature>
<feature type="repeat" description="16">
    <location>
        <begin position="186"/>
        <end position="190"/>
    </location>
</feature>
<feature type="repeat" description="17">
    <location>
        <begin position="208"/>
        <end position="212"/>
    </location>
</feature>
<feature type="repeat" description="18">
    <location>
        <begin position="218"/>
        <end position="222"/>
    </location>
</feature>
<feature type="repeat" description="19">
    <location>
        <begin position="228"/>
        <end position="232"/>
    </location>
</feature>
<feature type="repeat" description="20">
    <location>
        <begin position="233"/>
        <end position="237"/>
    </location>
</feature>
<feature type="repeat" description="21">
    <location>
        <begin position="238"/>
        <end position="242"/>
    </location>
</feature>
<feature type="repeat" description="22">
    <location>
        <begin position="250"/>
        <end position="254"/>
    </location>
</feature>
<feature type="repeat" description="23">
    <location>
        <begin position="260"/>
        <end position="264"/>
    </location>
</feature>
<feature type="repeat" description="24">
    <location>
        <begin position="270"/>
        <end position="274"/>
    </location>
</feature>
<feature type="repeat" description="25">
    <location>
        <begin position="282"/>
        <end position="286"/>
    </location>
</feature>
<feature type="repeat" description="26">
    <location>
        <begin position="292"/>
        <end position="296"/>
    </location>
</feature>
<feature type="repeat" description="27">
    <location>
        <begin position="297"/>
        <end position="301"/>
    </location>
</feature>
<feature type="repeat" description="28">
    <location>
        <begin position="316"/>
        <end position="320"/>
    </location>
</feature>
<feature type="repeat" description="29">
    <location>
        <begin position="334"/>
        <end position="338"/>
    </location>
</feature>
<feature type="region of interest" description="29 X 5 AA repeats of C-C-X(3)">
    <location>
        <begin position="41"/>
        <end position="338"/>
    </location>
</feature>
<feature type="sequence variant" id="VAR_060049" description="In dbSNP:rs13051409.">
    <original>C</original>
    <variation>S</variation>
    <location>
        <position position="68"/>
    </location>
</feature>
<feature type="sequence variant" id="VAR_060050" description="In dbSNP:rs13050443.">
    <original>P</original>
    <variation>S</variation>
    <location>
        <position position="74"/>
    </location>
</feature>
<feature type="sequence variant" id="VAR_017699">
    <original>C</original>
    <variation>CPSCCA</variation>
    <location>
        <position position="81"/>
    </location>
</feature>
<feature type="sequence variant" id="VAR_057649" description="In dbSNP:rs233306.">
    <original>V</original>
    <variation>I</variation>
    <location>
        <position position="159"/>
    </location>
</feature>
<feature type="sequence variant" id="VAR_062533" description="In dbSNP:rs465279.">
    <original>S</original>
    <variation>P</variation>
    <location>
        <position position="300"/>
    </location>
</feature>